<proteinExistence type="evidence at protein level"/>
<comment type="function">
    <text evidence="7">Involved in oxygen transport from the lung to the various peripheral tissues.</text>
</comment>
<comment type="subunit">
    <text evidence="7">Heterotetramer of two alpha chains and two beta chains.</text>
</comment>
<comment type="tissue specificity">
    <text evidence="7">Red blood cells.</text>
</comment>
<comment type="similarity">
    <text evidence="4">Belongs to the globin family.</text>
</comment>
<evidence type="ECO:0000250" key="1">
    <source>
        <dbReference type="UniProtKB" id="P02070"/>
    </source>
</evidence>
<evidence type="ECO:0000250" key="2">
    <source>
        <dbReference type="UniProtKB" id="P02086"/>
    </source>
</evidence>
<evidence type="ECO:0000250" key="3">
    <source>
        <dbReference type="UniProtKB" id="P68871"/>
    </source>
</evidence>
<evidence type="ECO:0000255" key="4">
    <source>
        <dbReference type="PROSITE-ProRule" id="PRU00238"/>
    </source>
</evidence>
<evidence type="ECO:0000269" key="5">
    <source>
    </source>
</evidence>
<evidence type="ECO:0000303" key="6">
    <source>
    </source>
</evidence>
<evidence type="ECO:0000305" key="7"/>
<dbReference type="SMR" id="B3EWD0"/>
<dbReference type="GO" id="GO:0072562">
    <property type="term" value="C:blood microparticle"/>
    <property type="evidence" value="ECO:0007669"/>
    <property type="project" value="TreeGrafter"/>
</dbReference>
<dbReference type="GO" id="GO:0031838">
    <property type="term" value="C:haptoglobin-hemoglobin complex"/>
    <property type="evidence" value="ECO:0007669"/>
    <property type="project" value="TreeGrafter"/>
</dbReference>
<dbReference type="GO" id="GO:0005833">
    <property type="term" value="C:hemoglobin complex"/>
    <property type="evidence" value="ECO:0007669"/>
    <property type="project" value="InterPro"/>
</dbReference>
<dbReference type="GO" id="GO:0031720">
    <property type="term" value="F:haptoglobin binding"/>
    <property type="evidence" value="ECO:0007669"/>
    <property type="project" value="TreeGrafter"/>
</dbReference>
<dbReference type="GO" id="GO:0020037">
    <property type="term" value="F:heme binding"/>
    <property type="evidence" value="ECO:0007669"/>
    <property type="project" value="InterPro"/>
</dbReference>
<dbReference type="GO" id="GO:0031721">
    <property type="term" value="F:hemoglobin alpha binding"/>
    <property type="evidence" value="ECO:0007669"/>
    <property type="project" value="TreeGrafter"/>
</dbReference>
<dbReference type="GO" id="GO:0046872">
    <property type="term" value="F:metal ion binding"/>
    <property type="evidence" value="ECO:0007669"/>
    <property type="project" value="UniProtKB-KW"/>
</dbReference>
<dbReference type="GO" id="GO:0043177">
    <property type="term" value="F:organic acid binding"/>
    <property type="evidence" value="ECO:0007669"/>
    <property type="project" value="TreeGrafter"/>
</dbReference>
<dbReference type="GO" id="GO:0019825">
    <property type="term" value="F:oxygen binding"/>
    <property type="evidence" value="ECO:0007669"/>
    <property type="project" value="InterPro"/>
</dbReference>
<dbReference type="GO" id="GO:0005344">
    <property type="term" value="F:oxygen carrier activity"/>
    <property type="evidence" value="ECO:0007669"/>
    <property type="project" value="UniProtKB-KW"/>
</dbReference>
<dbReference type="GO" id="GO:0004601">
    <property type="term" value="F:peroxidase activity"/>
    <property type="evidence" value="ECO:0007669"/>
    <property type="project" value="TreeGrafter"/>
</dbReference>
<dbReference type="GO" id="GO:0042744">
    <property type="term" value="P:hydrogen peroxide catabolic process"/>
    <property type="evidence" value="ECO:0007669"/>
    <property type="project" value="TreeGrafter"/>
</dbReference>
<dbReference type="CDD" id="cd08925">
    <property type="entry name" value="Hb-beta-like"/>
    <property type="match status" value="1"/>
</dbReference>
<dbReference type="FunFam" id="1.10.490.10:FF:000001">
    <property type="entry name" value="Hemoglobin subunit beta"/>
    <property type="match status" value="1"/>
</dbReference>
<dbReference type="Gene3D" id="1.10.490.10">
    <property type="entry name" value="Globins"/>
    <property type="match status" value="1"/>
</dbReference>
<dbReference type="InterPro" id="IPR000971">
    <property type="entry name" value="Globin"/>
</dbReference>
<dbReference type="InterPro" id="IPR009050">
    <property type="entry name" value="Globin-like_sf"/>
</dbReference>
<dbReference type="InterPro" id="IPR012292">
    <property type="entry name" value="Globin/Proto"/>
</dbReference>
<dbReference type="InterPro" id="IPR002337">
    <property type="entry name" value="Hemoglobin_b"/>
</dbReference>
<dbReference type="InterPro" id="IPR050056">
    <property type="entry name" value="Hemoglobin_oxygen_transport"/>
</dbReference>
<dbReference type="PANTHER" id="PTHR11442">
    <property type="entry name" value="HEMOGLOBIN FAMILY MEMBER"/>
    <property type="match status" value="1"/>
</dbReference>
<dbReference type="PANTHER" id="PTHR11442:SF42">
    <property type="entry name" value="HEMOGLOBIN SUBUNIT BETA"/>
    <property type="match status" value="1"/>
</dbReference>
<dbReference type="Pfam" id="PF00042">
    <property type="entry name" value="Globin"/>
    <property type="match status" value="1"/>
</dbReference>
<dbReference type="PRINTS" id="PR00814">
    <property type="entry name" value="BETAHAEM"/>
</dbReference>
<dbReference type="SUPFAM" id="SSF46458">
    <property type="entry name" value="Globin-like"/>
    <property type="match status" value="1"/>
</dbReference>
<dbReference type="PROSITE" id="PS01033">
    <property type="entry name" value="GLOBIN"/>
    <property type="match status" value="1"/>
</dbReference>
<keyword id="KW-0007">Acetylation</keyword>
<keyword id="KW-0903">Direct protein sequencing</keyword>
<keyword id="KW-0349">Heme</keyword>
<keyword id="KW-0408">Iron</keyword>
<keyword id="KW-0479">Metal-binding</keyword>
<keyword id="KW-0561">Oxygen transport</keyword>
<keyword id="KW-0597">Phosphoprotein</keyword>
<keyword id="KW-0702">S-nitrosylation</keyword>
<keyword id="KW-0813">Transport</keyword>
<accession>B3EWD0</accession>
<name>HBB_OTOBE</name>
<protein>
    <recommendedName>
        <fullName evidence="6">Hemoglobin subunit beta</fullName>
    </recommendedName>
</protein>
<organism>
    <name type="scientific">Otospermophilus beecheyi</name>
    <name type="common">California ground squirrel</name>
    <name type="synonym">Spermophilus beecheyi</name>
    <dbReference type="NCBI Taxonomy" id="34862"/>
    <lineage>
        <taxon>Eukaryota</taxon>
        <taxon>Metazoa</taxon>
        <taxon>Chordata</taxon>
        <taxon>Craniata</taxon>
        <taxon>Vertebrata</taxon>
        <taxon>Euteleostomi</taxon>
        <taxon>Mammalia</taxon>
        <taxon>Eutheria</taxon>
        <taxon>Euarchontoglires</taxon>
        <taxon>Glires</taxon>
        <taxon>Rodentia</taxon>
        <taxon>Sciuromorpha</taxon>
        <taxon>Sciuridae</taxon>
        <taxon>Xerinae</taxon>
        <taxon>Marmotini</taxon>
        <taxon>Otospermophilus</taxon>
    </lineage>
</organism>
<reference evidence="7" key="1">
    <citation type="journal article" date="2012" name="Biol. Chem.">
        <title>Development of a host blood meal database: de novo sequencing of hemoglobin from nine small mammals using mass spectrometry.</title>
        <authorList>
            <person name="Laskay U.A."/>
            <person name="Burg J."/>
            <person name="Kaleta E.J."/>
            <person name="Vilcins I.M."/>
            <person name="Telford Iii S.R."/>
            <person name="Barbour A.G."/>
            <person name="Wysocki V.H."/>
        </authorList>
    </citation>
    <scope>PROTEIN SEQUENCE</scope>
    <source>
        <tissue evidence="5">Erythrocyte</tissue>
    </source>
</reference>
<sequence length="146" mass="15825">VHLTDGEKNALSTAWGKVNADEVGGEALGRLLVVYPWTQRFFDSFGDLSSATAVMGNPKVKAHGKKVLDSFSNGLKHLDNLKGTFASLSELHCDKLHVDPENFRLLGNVLVVVLAHHLGKEFTPQVQAAFQKVVAGVANALAHKYH</sequence>
<feature type="chain" id="PRO_0000415598" description="Hemoglobin subunit beta">
    <location>
        <begin position="1"/>
        <end position="146"/>
    </location>
</feature>
<feature type="domain" description="Globin" evidence="4">
    <location>
        <begin position="2"/>
        <end position="146"/>
    </location>
</feature>
<feature type="binding site" description="distal binding residue" evidence="1 4">
    <location>
        <position position="63"/>
    </location>
    <ligand>
        <name>heme b</name>
        <dbReference type="ChEBI" id="CHEBI:60344"/>
    </ligand>
    <ligandPart>
        <name>Fe</name>
        <dbReference type="ChEBI" id="CHEBI:18248"/>
    </ligandPart>
</feature>
<feature type="binding site" description="proximal binding residue" evidence="1 4">
    <location>
        <position position="92"/>
    </location>
    <ligand>
        <name>heme b</name>
        <dbReference type="ChEBI" id="CHEBI:60344"/>
    </ligand>
    <ligandPart>
        <name>Fe</name>
        <dbReference type="ChEBI" id="CHEBI:18248"/>
    </ligandPart>
</feature>
<feature type="modified residue" description="N-acetylvaline" evidence="2">
    <location>
        <position position="1"/>
    </location>
</feature>
<feature type="modified residue" description="Phosphoserine" evidence="3">
    <location>
        <position position="44"/>
    </location>
</feature>
<feature type="modified residue" description="N6-acetyllysine" evidence="3">
    <location>
        <position position="59"/>
    </location>
</feature>
<feature type="modified residue" description="N6-acetyllysine" evidence="3">
    <location>
        <position position="82"/>
    </location>
</feature>
<feature type="modified residue" description="S-nitrosocysteine" evidence="3">
    <location>
        <position position="93"/>
    </location>
</feature>
<feature type="modified residue" description="N6-acetyllysine" evidence="3">
    <location>
        <position position="144"/>
    </location>
</feature>
<feature type="unsure residue" description="L or I" evidence="5">
    <location>
        <position position="3"/>
    </location>
</feature>
<feature type="unsure residue" description="L or I" evidence="5">
    <location>
        <position position="11"/>
    </location>
</feature>
<feature type="unsure residue" description="L or I" evidence="5">
    <location>
        <position position="28"/>
    </location>
</feature>
<feature type="unsure residue" description="L or I" evidence="5">
    <location>
        <position position="31"/>
    </location>
</feature>
<feature type="unsure residue" description="L or I" evidence="5">
    <location>
        <position position="32"/>
    </location>
</feature>
<feature type="unsure residue" description="L or I" evidence="5">
    <location>
        <position position="48"/>
    </location>
</feature>
<feature type="unsure residue" description="L or I" evidence="5">
    <location>
        <position position="68"/>
    </location>
</feature>
<feature type="unsure residue" description="L or I" evidence="5">
    <location>
        <position position="75"/>
    </location>
</feature>
<feature type="unsure residue" description="L or I" evidence="5">
    <location>
        <position position="78"/>
    </location>
</feature>
<feature type="unsure residue" description="L or I" evidence="5">
    <location>
        <position position="81"/>
    </location>
</feature>
<feature type="unsure residue" description="L or I" evidence="5">
    <location>
        <position position="88"/>
    </location>
</feature>
<feature type="unsure residue" description="L or I" evidence="5">
    <location>
        <position position="91"/>
    </location>
</feature>
<feature type="unsure residue" description="L or I" evidence="5">
    <location>
        <position position="96"/>
    </location>
</feature>
<feature type="unsure residue" description="L or I" evidence="5">
    <location>
        <position position="105"/>
    </location>
</feature>
<feature type="unsure residue" description="L or I" evidence="5">
    <location>
        <position position="106"/>
    </location>
</feature>
<feature type="unsure residue" description="L or I" evidence="5">
    <location>
        <position position="110"/>
    </location>
</feature>
<feature type="unsure residue" description="L or I" evidence="5">
    <location>
        <position position="114"/>
    </location>
</feature>
<feature type="unsure residue" description="L or I" evidence="5">
    <location>
        <position position="118"/>
    </location>
</feature>
<feature type="unsure residue" description="L or I" evidence="5">
    <location>
        <position position="141"/>
    </location>
</feature>